<sequence>MQHDGSFNPEARFDAVLVGAGIMSATLAALLHELDTQLRILLVERLEAPALESSAAVNNAGTGHAANCELNYTPIQADGTVATAKAVAINTSFERSLEFWSSLQERGDLDTSSFLHQAAHISAVWTPENIAFLRQRFSQLKELPAFARMRWSEDQSELTEWMPLVMAGRDLKQPVAATRIDRGTDVDFGSLTRAYLMPLQQSGALSVEYGTQVHDLKRLRHSDMTEADWRVVLKGPSGKKEVRAPFVFLGAGGGALPLLQRSGIPEAADFAGFPVSGLWLVCGDAQLADRQRAKVYGKAAVGAPPMSVPHLDTRWVDGKRSLLFGPFAGFSSKFLKQGSLLDLPASVRATNLLPMLQVGATNFELVQYLINQLRQSPTQRHEALQQFMPTARAEDWTLSVAGQRVQIIKRSKQGGRLQLGTEVVASGDGSLAALLGASPGASTAVTIMLEVLERCFKQRLDSDAWQQRLQALLPSIHEDPHQDPQVLNRMRERSDALLGLTA</sequence>
<reference key="1">
    <citation type="submission" date="2005-07" db="EMBL/GenBank/DDBJ databases">
        <title>Complete sequence of Synechococcus sp. CC9605.</title>
        <authorList>
            <consortium name="US DOE Joint Genome Institute"/>
            <person name="Copeland A."/>
            <person name="Lucas S."/>
            <person name="Lapidus A."/>
            <person name="Barry K."/>
            <person name="Detter J.C."/>
            <person name="Glavina T."/>
            <person name="Hammon N."/>
            <person name="Israni S."/>
            <person name="Pitluck S."/>
            <person name="Schmutz J."/>
            <person name="Martinez M."/>
            <person name="Larimer F."/>
            <person name="Land M."/>
            <person name="Kyrpides N."/>
            <person name="Ivanova N."/>
            <person name="Richardson P."/>
        </authorList>
    </citation>
    <scope>NUCLEOTIDE SEQUENCE [LARGE SCALE GENOMIC DNA]</scope>
    <source>
        <strain>CC9605</strain>
    </source>
</reference>
<comment type="catalytic activity">
    <reaction evidence="1">
        <text>(S)-malate + a quinone = a quinol + oxaloacetate</text>
        <dbReference type="Rhea" id="RHEA:46012"/>
        <dbReference type="ChEBI" id="CHEBI:15589"/>
        <dbReference type="ChEBI" id="CHEBI:16452"/>
        <dbReference type="ChEBI" id="CHEBI:24646"/>
        <dbReference type="ChEBI" id="CHEBI:132124"/>
        <dbReference type="EC" id="1.1.5.4"/>
    </reaction>
</comment>
<comment type="cofactor">
    <cofactor evidence="1">
        <name>FAD</name>
        <dbReference type="ChEBI" id="CHEBI:57692"/>
    </cofactor>
</comment>
<comment type="pathway">
    <text evidence="1">Carbohydrate metabolism; tricarboxylic acid cycle; oxaloacetate from (S)-malate (quinone route): step 1/1.</text>
</comment>
<comment type="similarity">
    <text evidence="1">Belongs to the MQO family.</text>
</comment>
<comment type="sequence caution" evidence="2">
    <conflict type="erroneous initiation">
        <sequence resource="EMBL-CDS" id="ABB34565"/>
    </conflict>
</comment>
<evidence type="ECO:0000255" key="1">
    <source>
        <dbReference type="HAMAP-Rule" id="MF_00212"/>
    </source>
</evidence>
<evidence type="ECO:0000305" key="2"/>
<dbReference type="EC" id="1.1.5.4" evidence="1"/>
<dbReference type="EMBL" id="CP000110">
    <property type="protein sequence ID" value="ABB34565.1"/>
    <property type="status" value="ALT_INIT"/>
    <property type="molecule type" value="Genomic_DNA"/>
</dbReference>
<dbReference type="RefSeq" id="WP_041434464.1">
    <property type="nucleotide sequence ID" value="NC_007516.1"/>
</dbReference>
<dbReference type="SMR" id="Q3ALG7"/>
<dbReference type="STRING" id="110662.Syncc9605_0797"/>
<dbReference type="KEGG" id="syd:Syncc9605_0797"/>
<dbReference type="eggNOG" id="COG0579">
    <property type="taxonomic scope" value="Bacteria"/>
</dbReference>
<dbReference type="HOGENOM" id="CLU_028151_0_0_3"/>
<dbReference type="OrthoDB" id="9763983at2"/>
<dbReference type="UniPathway" id="UPA00223">
    <property type="reaction ID" value="UER01008"/>
</dbReference>
<dbReference type="GO" id="GO:0047545">
    <property type="term" value="F:2-hydroxyglutarate dehydrogenase activity"/>
    <property type="evidence" value="ECO:0007669"/>
    <property type="project" value="TreeGrafter"/>
</dbReference>
<dbReference type="GO" id="GO:0008924">
    <property type="term" value="F:L-malate dehydrogenase (quinone) activity"/>
    <property type="evidence" value="ECO:0007669"/>
    <property type="project" value="UniProtKB-UniRule"/>
</dbReference>
<dbReference type="GO" id="GO:0006099">
    <property type="term" value="P:tricarboxylic acid cycle"/>
    <property type="evidence" value="ECO:0007669"/>
    <property type="project" value="UniProtKB-UniRule"/>
</dbReference>
<dbReference type="Gene3D" id="3.30.9.10">
    <property type="entry name" value="D-Amino Acid Oxidase, subunit A, domain 2"/>
    <property type="match status" value="1"/>
</dbReference>
<dbReference type="Gene3D" id="3.50.50.60">
    <property type="entry name" value="FAD/NAD(P)-binding domain"/>
    <property type="match status" value="1"/>
</dbReference>
<dbReference type="HAMAP" id="MF_00212">
    <property type="entry name" value="MQO"/>
    <property type="match status" value="1"/>
</dbReference>
<dbReference type="InterPro" id="IPR036188">
    <property type="entry name" value="FAD/NAD-bd_sf"/>
</dbReference>
<dbReference type="InterPro" id="IPR006231">
    <property type="entry name" value="MQO"/>
</dbReference>
<dbReference type="NCBIfam" id="TIGR01320">
    <property type="entry name" value="mal_quin_oxido"/>
    <property type="match status" value="1"/>
</dbReference>
<dbReference type="NCBIfam" id="NF003606">
    <property type="entry name" value="PRK05257.2-1"/>
    <property type="match status" value="1"/>
</dbReference>
<dbReference type="NCBIfam" id="NF003607">
    <property type="entry name" value="PRK05257.2-3"/>
    <property type="match status" value="1"/>
</dbReference>
<dbReference type="NCBIfam" id="NF003611">
    <property type="entry name" value="PRK05257.3-2"/>
    <property type="match status" value="1"/>
</dbReference>
<dbReference type="PANTHER" id="PTHR43104">
    <property type="entry name" value="L-2-HYDROXYGLUTARATE DEHYDROGENASE, MITOCHONDRIAL"/>
    <property type="match status" value="1"/>
</dbReference>
<dbReference type="PANTHER" id="PTHR43104:SF2">
    <property type="entry name" value="L-2-HYDROXYGLUTARATE DEHYDROGENASE, MITOCHONDRIAL"/>
    <property type="match status" value="1"/>
</dbReference>
<dbReference type="Pfam" id="PF06039">
    <property type="entry name" value="Mqo"/>
    <property type="match status" value="1"/>
</dbReference>
<dbReference type="SUPFAM" id="SSF51905">
    <property type="entry name" value="FAD/NAD(P)-binding domain"/>
    <property type="match status" value="1"/>
</dbReference>
<organism>
    <name type="scientific">Synechococcus sp. (strain CC9605)</name>
    <dbReference type="NCBI Taxonomy" id="110662"/>
    <lineage>
        <taxon>Bacteria</taxon>
        <taxon>Bacillati</taxon>
        <taxon>Cyanobacteriota</taxon>
        <taxon>Cyanophyceae</taxon>
        <taxon>Synechococcales</taxon>
        <taxon>Synechococcaceae</taxon>
        <taxon>Synechococcus</taxon>
    </lineage>
</organism>
<name>MQO_SYNSC</name>
<protein>
    <recommendedName>
        <fullName evidence="1">Probable malate:quinone oxidoreductase</fullName>
        <ecNumber evidence="1">1.1.5.4</ecNumber>
    </recommendedName>
    <alternativeName>
        <fullName evidence="1">MQO</fullName>
    </alternativeName>
    <alternativeName>
        <fullName evidence="1">Malate dehydrogenase [quinone]</fullName>
    </alternativeName>
</protein>
<proteinExistence type="inferred from homology"/>
<keyword id="KW-0274">FAD</keyword>
<keyword id="KW-0285">Flavoprotein</keyword>
<keyword id="KW-0560">Oxidoreductase</keyword>
<keyword id="KW-0816">Tricarboxylic acid cycle</keyword>
<gene>
    <name evidence="1" type="primary">mqo</name>
    <name type="ordered locus">Syncc9605_0797</name>
</gene>
<feature type="chain" id="PRO_0000325514" description="Probable malate:quinone oxidoreductase">
    <location>
        <begin position="1"/>
        <end position="502"/>
    </location>
</feature>
<accession>Q3ALG7</accession>